<reference key="1">
    <citation type="submission" date="2007-08" db="EMBL/GenBank/DDBJ databases">
        <authorList>
            <person name="Mural R.J."/>
            <person name="Adams M.D."/>
            <person name="Myers E.W."/>
            <person name="Smith H.O."/>
            <person name="Venter J.C."/>
        </authorList>
    </citation>
    <scope>NUCLEOTIDE SEQUENCE [LARGE SCALE GENOMIC DNA]</scope>
    <source>
        <strain>Brown Norway</strain>
    </source>
</reference>
<reference key="2">
    <citation type="journal article" date="2004" name="Genome Res.">
        <title>The status, quality, and expansion of the NIH full-length cDNA project: the Mammalian Gene Collection (MGC).</title>
        <authorList>
            <consortium name="The MGC Project Team"/>
        </authorList>
    </citation>
    <scope>NUCLEOTIDE SEQUENCE [LARGE SCALE MRNA]</scope>
    <source>
        <tissue>Brain</tissue>
    </source>
</reference>
<reference key="3">
    <citation type="journal article" date="1995" name="J. Biol. Chem.">
        <title>The factor binding to the glucocorticoid modulatory element of the tyrosine aminotransferase gene is a novel and ubiquitous heteromeric complex.</title>
        <authorList>
            <person name="Oshima H."/>
            <person name="Szapary D."/>
            <person name="Simons S.S. Jr."/>
        </authorList>
    </citation>
    <scope>PROTEIN SEQUENCE OF 123-129; 183-195 AND 317-334</scope>
</reference>
<sequence>MANAEVSVPVGDVVVVPTEGNEGENPEDTKTQVILQLQPVQQGIYEAGSENSAAVVAVETHTIHKIEEGIDASSIEANEDMEIAYPITCGESKAVLLWKKFVCPGINVKCVKFNDQLISPKHFVHLAGKSTLKDWKRAIRLGGIMLRKMMDSGQIDFYQHDKVCSNTCRSTKFDLLISSARAPVPGQQTSVVQTPTSADGNITQIAISEESMEEAGLEWNSALTAAVTMATEEGIKKESEEISEDTLMFWKGIADVGLMEEVVCNIQKEIEELLRGVQQRLIHAPFQVTDAAVLNNVANTFGLMDTVKRVLDNRRKQVEHGEEQFLYTLADLERQLEEQKKQAQDPRLKSQTVQNVVLMPVSTPKPPKRPRLQRPASTTVLSPSPVQQPQFTVISPITITPVGQSFSMGNIPVATLSQGTSPVTVHTLPSGPQLFRYATVVSSAKSNSPDTVTIHPSSSLALLSSTSMQDGSTLGNMATMVSPVELVAMESGLTSAIQAVESTSEDGQTIIEIDPAPDPEADDPEGKAVILETELRTEEKVVANMEERQHQVHNVEIVVLED</sequence>
<name>GMEB1_RAT</name>
<keyword id="KW-0007">Acetylation</keyword>
<keyword id="KW-0175">Coiled coil</keyword>
<keyword id="KW-0963">Cytoplasm</keyword>
<keyword id="KW-0903">Direct protein sequencing</keyword>
<keyword id="KW-0238">DNA-binding</keyword>
<keyword id="KW-0479">Metal-binding</keyword>
<keyword id="KW-0539">Nucleus</keyword>
<keyword id="KW-1185">Reference proteome</keyword>
<keyword id="KW-0804">Transcription</keyword>
<keyword id="KW-0805">Transcription regulation</keyword>
<keyword id="KW-0862">Zinc</keyword>
<gene>
    <name type="primary">Gmeb1</name>
</gene>
<comment type="function">
    <text evidence="1">Trans-acting factor that binds to glucocorticoid modulatory elements (GME) present in the TAT (tyrosine aminotransferase) promoter and increases sensitivity to low concentrations of glucocorticoids. Also binds to the transferrin receptor promoter (By similarity).</text>
</comment>
<comment type="subunit">
    <text evidence="1">Homodimer, and heterodimer of GMEB1 and GMEB2. Interacts with the glucocorticoid receptor (NR3C1) and NCOA2/TIF2. May interact with HSP27 and CREB-binding protein (CBP). Interacts with TRIM63 (By similarity).</text>
</comment>
<comment type="subcellular location">
    <subcellularLocation>
        <location>Nucleus</location>
    </subcellularLocation>
    <subcellularLocation>
        <location>Cytoplasm</location>
    </subcellularLocation>
    <text>May be also cytoplasmic.</text>
</comment>
<protein>
    <recommendedName>
        <fullName>Glucocorticoid modulatory element-binding protein 1</fullName>
        <shortName>GMEB-1</shortName>
    </recommendedName>
</protein>
<accession>Q9QUZ8</accession>
<accession>B0BN09</accession>
<feature type="initiator methionine" description="Removed" evidence="2">
    <location>
        <position position="1"/>
    </location>
</feature>
<feature type="chain" id="PRO_0000074091" description="Glucocorticoid modulatory element-binding protein 1">
    <location>
        <begin position="2"/>
        <end position="562"/>
    </location>
</feature>
<feature type="domain" description="SAND" evidence="4">
    <location>
        <begin position="72"/>
        <end position="156"/>
    </location>
</feature>
<feature type="region of interest" description="Disordered" evidence="5">
    <location>
        <begin position="360"/>
        <end position="384"/>
    </location>
</feature>
<feature type="coiled-coil region" evidence="3">
    <location>
        <begin position="311"/>
        <end position="357"/>
    </location>
</feature>
<feature type="compositionally biased region" description="Polar residues" evidence="5">
    <location>
        <begin position="375"/>
        <end position="384"/>
    </location>
</feature>
<feature type="binding site" evidence="1">
    <location>
        <position position="103"/>
    </location>
    <ligand>
        <name>Zn(2+)</name>
        <dbReference type="ChEBI" id="CHEBI:29105"/>
    </ligand>
</feature>
<feature type="binding site" evidence="1">
    <location>
        <position position="129"/>
    </location>
    <ligand>
        <name>DNA</name>
        <dbReference type="ChEBI" id="CHEBI:16991"/>
    </ligand>
</feature>
<feature type="binding site" evidence="1">
    <location>
        <position position="133"/>
    </location>
    <ligand>
        <name>DNA</name>
        <dbReference type="ChEBI" id="CHEBI:16991"/>
    </ligand>
</feature>
<feature type="binding site" evidence="1">
    <location>
        <position position="136"/>
    </location>
    <ligand>
        <name>DNA</name>
        <dbReference type="ChEBI" id="CHEBI:16991"/>
    </ligand>
</feature>
<feature type="binding site" evidence="1">
    <location>
        <position position="147"/>
    </location>
    <ligand>
        <name>DNA</name>
        <dbReference type="ChEBI" id="CHEBI:16991"/>
    </ligand>
</feature>
<feature type="binding site" evidence="1">
    <location>
        <position position="160"/>
    </location>
    <ligand>
        <name>Zn(2+)</name>
        <dbReference type="ChEBI" id="CHEBI:29105"/>
    </ligand>
</feature>
<feature type="binding site" evidence="1">
    <location>
        <position position="164"/>
    </location>
    <ligand>
        <name>Zn(2+)</name>
        <dbReference type="ChEBI" id="CHEBI:29105"/>
    </ligand>
</feature>
<feature type="binding site" evidence="1">
    <location>
        <position position="168"/>
    </location>
    <ligand>
        <name>Zn(2+)</name>
        <dbReference type="ChEBI" id="CHEBI:29105"/>
    </ligand>
</feature>
<feature type="modified residue" description="N-acetylalanine" evidence="2">
    <location>
        <position position="2"/>
    </location>
</feature>
<evidence type="ECO:0000250" key="1"/>
<evidence type="ECO:0000250" key="2">
    <source>
        <dbReference type="UniProtKB" id="Q9Y692"/>
    </source>
</evidence>
<evidence type="ECO:0000255" key="3"/>
<evidence type="ECO:0000255" key="4">
    <source>
        <dbReference type="PROSITE-ProRule" id="PRU00185"/>
    </source>
</evidence>
<evidence type="ECO:0000256" key="5">
    <source>
        <dbReference type="SAM" id="MobiDB-lite"/>
    </source>
</evidence>
<dbReference type="EMBL" id="CH473968">
    <property type="protein sequence ID" value="EDL80619.1"/>
    <property type="molecule type" value="Genomic_DNA"/>
</dbReference>
<dbReference type="EMBL" id="BC158640">
    <property type="protein sequence ID" value="AAI58641.1"/>
    <property type="molecule type" value="mRNA"/>
</dbReference>
<dbReference type="RefSeq" id="NP_001102738.1">
    <property type="nucleotide sequence ID" value="NM_001109268.2"/>
</dbReference>
<dbReference type="RefSeq" id="XP_008762387.1">
    <property type="nucleotide sequence ID" value="XM_008764165.1"/>
</dbReference>
<dbReference type="RefSeq" id="XP_008762389.1">
    <property type="nucleotide sequence ID" value="XM_008764167.2"/>
</dbReference>
<dbReference type="RefSeq" id="XP_008762390.1">
    <property type="nucleotide sequence ID" value="XM_008764168.1"/>
</dbReference>
<dbReference type="RefSeq" id="XP_038966541.1">
    <property type="nucleotide sequence ID" value="XM_039110613.2"/>
</dbReference>
<dbReference type="RefSeq" id="XP_038966542.1">
    <property type="nucleotide sequence ID" value="XM_039110614.2"/>
</dbReference>
<dbReference type="RefSeq" id="XP_063144337.1">
    <property type="nucleotide sequence ID" value="XM_063288267.1"/>
</dbReference>
<dbReference type="RefSeq" id="XP_063144338.1">
    <property type="nucleotide sequence ID" value="XM_063288268.1"/>
</dbReference>
<dbReference type="RefSeq" id="XP_063144339.1">
    <property type="nucleotide sequence ID" value="XM_063288269.1"/>
</dbReference>
<dbReference type="SMR" id="Q9QUZ8"/>
<dbReference type="FunCoup" id="Q9QUZ8">
    <property type="interactions" value="2936"/>
</dbReference>
<dbReference type="STRING" id="10116.ENSRNOP00000014506"/>
<dbReference type="PhosphoSitePlus" id="Q9QUZ8"/>
<dbReference type="PaxDb" id="10116-ENSRNOP00000014506"/>
<dbReference type="Ensembl" id="ENSRNOT00000014506.7">
    <property type="protein sequence ID" value="ENSRNOP00000014506.4"/>
    <property type="gene ID" value="ENSRNOG00000010910.7"/>
</dbReference>
<dbReference type="GeneID" id="500558"/>
<dbReference type="KEGG" id="rno:500558"/>
<dbReference type="UCSC" id="RGD:1563208">
    <property type="organism name" value="rat"/>
</dbReference>
<dbReference type="AGR" id="RGD:1563208"/>
<dbReference type="CTD" id="10691"/>
<dbReference type="RGD" id="1563208">
    <property type="gene designation" value="Gmeb1"/>
</dbReference>
<dbReference type="eggNOG" id="KOG4333">
    <property type="taxonomic scope" value="Eukaryota"/>
</dbReference>
<dbReference type="GeneTree" id="ENSGT00410000025596"/>
<dbReference type="HOGENOM" id="CLU_030344_1_0_1"/>
<dbReference type="InParanoid" id="Q9QUZ8"/>
<dbReference type="OMA" id="SPINQQA"/>
<dbReference type="OrthoDB" id="5792412at2759"/>
<dbReference type="PhylomeDB" id="Q9QUZ8"/>
<dbReference type="TreeFam" id="TF317090"/>
<dbReference type="PRO" id="PR:Q9QUZ8"/>
<dbReference type="Proteomes" id="UP000002494">
    <property type="component" value="Chromosome 5"/>
</dbReference>
<dbReference type="Proteomes" id="UP000234681">
    <property type="component" value="Chromosome 5"/>
</dbReference>
<dbReference type="Bgee" id="ENSRNOG00000010910">
    <property type="expression patterns" value="Expressed in thymus and 19 other cell types or tissues"/>
</dbReference>
<dbReference type="GO" id="GO:0005737">
    <property type="term" value="C:cytoplasm"/>
    <property type="evidence" value="ECO:0007669"/>
    <property type="project" value="UniProtKB-SubCell"/>
</dbReference>
<dbReference type="GO" id="GO:0005654">
    <property type="term" value="C:nucleoplasm"/>
    <property type="evidence" value="ECO:0007669"/>
    <property type="project" value="Ensembl"/>
</dbReference>
<dbReference type="GO" id="GO:0005634">
    <property type="term" value="C:nucleus"/>
    <property type="evidence" value="ECO:0000266"/>
    <property type="project" value="RGD"/>
</dbReference>
<dbReference type="GO" id="GO:0001228">
    <property type="term" value="F:DNA-binding transcription activator activity, RNA polymerase II-specific"/>
    <property type="evidence" value="ECO:0000266"/>
    <property type="project" value="RGD"/>
</dbReference>
<dbReference type="GO" id="GO:0003700">
    <property type="term" value="F:DNA-binding transcription factor activity"/>
    <property type="evidence" value="ECO:0000266"/>
    <property type="project" value="RGD"/>
</dbReference>
<dbReference type="GO" id="GO:0051008">
    <property type="term" value="F:Hsp27 protein binding"/>
    <property type="evidence" value="ECO:0000266"/>
    <property type="project" value="RGD"/>
</dbReference>
<dbReference type="GO" id="GO:0042802">
    <property type="term" value="F:identical protein binding"/>
    <property type="evidence" value="ECO:0000266"/>
    <property type="project" value="RGD"/>
</dbReference>
<dbReference type="GO" id="GO:0046872">
    <property type="term" value="F:metal ion binding"/>
    <property type="evidence" value="ECO:0007669"/>
    <property type="project" value="UniProtKB-KW"/>
</dbReference>
<dbReference type="GO" id="GO:0000978">
    <property type="term" value="F:RNA polymerase II cis-regulatory region sequence-specific DNA binding"/>
    <property type="evidence" value="ECO:0000266"/>
    <property type="project" value="RGD"/>
</dbReference>
<dbReference type="GO" id="GO:1990837">
    <property type="term" value="F:sequence-specific double-stranded DNA binding"/>
    <property type="evidence" value="ECO:0000266"/>
    <property type="project" value="RGD"/>
</dbReference>
<dbReference type="GO" id="GO:0045944">
    <property type="term" value="P:positive regulation of transcription by RNA polymerase II"/>
    <property type="evidence" value="ECO:0000266"/>
    <property type="project" value="RGD"/>
</dbReference>
<dbReference type="GO" id="GO:0006357">
    <property type="term" value="P:regulation of transcription by RNA polymerase II"/>
    <property type="evidence" value="ECO:0000318"/>
    <property type="project" value="GO_Central"/>
</dbReference>
<dbReference type="FunFam" id="3.10.390.10:FF:000003">
    <property type="entry name" value="glucocorticoid modulatory element-binding protein 1 isoform X2"/>
    <property type="match status" value="1"/>
</dbReference>
<dbReference type="Gene3D" id="3.10.390.10">
    <property type="entry name" value="SAND domain-like"/>
    <property type="match status" value="1"/>
</dbReference>
<dbReference type="InterPro" id="IPR010919">
    <property type="entry name" value="SAND-like_dom_sf"/>
</dbReference>
<dbReference type="InterPro" id="IPR000770">
    <property type="entry name" value="SAND_dom"/>
</dbReference>
<dbReference type="PANTHER" id="PTHR10417">
    <property type="entry name" value="GLUCOCORTICOID MODULATORY ELEMENT-BINDING PROTEIN"/>
    <property type="match status" value="1"/>
</dbReference>
<dbReference type="PANTHER" id="PTHR10417:SF3">
    <property type="entry name" value="GLUCOCORTICOID MODULATORY ELEMENT-BINDING PROTEIN 1"/>
    <property type="match status" value="1"/>
</dbReference>
<dbReference type="Pfam" id="PF01342">
    <property type="entry name" value="SAND"/>
    <property type="match status" value="1"/>
</dbReference>
<dbReference type="SMART" id="SM00258">
    <property type="entry name" value="SAND"/>
    <property type="match status" value="1"/>
</dbReference>
<dbReference type="SUPFAM" id="SSF63763">
    <property type="entry name" value="SAND domain-like"/>
    <property type="match status" value="1"/>
</dbReference>
<dbReference type="PROSITE" id="PS50864">
    <property type="entry name" value="SAND"/>
    <property type="match status" value="1"/>
</dbReference>
<proteinExistence type="evidence at protein level"/>
<organism>
    <name type="scientific">Rattus norvegicus</name>
    <name type="common">Rat</name>
    <dbReference type="NCBI Taxonomy" id="10116"/>
    <lineage>
        <taxon>Eukaryota</taxon>
        <taxon>Metazoa</taxon>
        <taxon>Chordata</taxon>
        <taxon>Craniata</taxon>
        <taxon>Vertebrata</taxon>
        <taxon>Euteleostomi</taxon>
        <taxon>Mammalia</taxon>
        <taxon>Eutheria</taxon>
        <taxon>Euarchontoglires</taxon>
        <taxon>Glires</taxon>
        <taxon>Rodentia</taxon>
        <taxon>Myomorpha</taxon>
        <taxon>Muroidea</taxon>
        <taxon>Muridae</taxon>
        <taxon>Murinae</taxon>
        <taxon>Rattus</taxon>
    </lineage>
</organism>